<sequence>KRGFLDVIKHVGKAALSVVSHLINEGEH</sequence>
<reference evidence="6" key="1">
    <citation type="journal article" date="2016" name="J. Proteomics">
        <title>Peptidomic approach identifies cruzioseptins, a new family of potent antimicrobial peptides in the splendid leaf frog, Cruziohyla calcarifer.</title>
        <authorList>
            <person name="Proano-Bolanos C."/>
            <person name="Zhou M."/>
            <person name="Wang L."/>
            <person name="Coloma L.A."/>
            <person name="Chen T."/>
            <person name="Shaw C."/>
        </authorList>
    </citation>
    <scope>NUCLEOTIDE SEQUENCE [MRNA]</scope>
    <scope>SUBCELLULAR LOCATION</scope>
    <scope>MASS SPECTROMETRY</scope>
    <scope>AMIDATION AT GLU-25</scope>
    <scope>IDENTIFICATION BY MASS SPECTROMETRY</scope>
    <source>
        <tissue evidence="6">Skin secretion</tissue>
    </source>
</reference>
<dbReference type="EMBL" id="KX065081">
    <property type="protein sequence ID" value="ANN87761.1"/>
    <property type="molecule type" value="mRNA"/>
</dbReference>
<dbReference type="GO" id="GO:0005576">
    <property type="term" value="C:extracellular region"/>
    <property type="evidence" value="ECO:0007669"/>
    <property type="project" value="UniProtKB-SubCell"/>
</dbReference>
<dbReference type="GO" id="GO:0006952">
    <property type="term" value="P:defense response"/>
    <property type="evidence" value="ECO:0007669"/>
    <property type="project" value="UniProtKB-KW"/>
</dbReference>
<comment type="function">
    <text evidence="1">Has antimicrobial activity.</text>
</comment>
<comment type="subcellular location">
    <subcellularLocation>
        <location evidence="2">Secreted</location>
    </subcellularLocation>
</comment>
<comment type="tissue specificity">
    <text evidence="5">Expressed by the skin glands.</text>
</comment>
<comment type="mass spectrometry"/>
<comment type="similarity">
    <text evidence="4">Belongs to the frog skin active peptide (FSAP) family. Cruzioseptin subfamily.</text>
</comment>
<protein>
    <recommendedName>
        <fullName>Cruzioseptin-4</fullName>
        <shortName evidence="3">CZS-4</shortName>
    </recommendedName>
</protein>
<proteinExistence type="evidence at protein level"/>
<accession>A0A193H2U2</accession>
<keyword id="KW-0027">Amidation</keyword>
<keyword id="KW-0878">Amphibian defense peptide</keyword>
<keyword id="KW-0929">Antimicrobial</keyword>
<keyword id="KW-0165">Cleavage on pair of basic residues</keyword>
<keyword id="KW-0964">Secreted</keyword>
<organism evidence="6">
    <name type="scientific">Cruziohyla calcarifer</name>
    <name type="common">Splendid leaf frog</name>
    <name type="synonym">Agalychnis calcarifer</name>
    <dbReference type="NCBI Taxonomy" id="318249"/>
    <lineage>
        <taxon>Eukaryota</taxon>
        <taxon>Metazoa</taxon>
        <taxon>Chordata</taxon>
        <taxon>Craniata</taxon>
        <taxon>Vertebrata</taxon>
        <taxon>Euteleostomi</taxon>
        <taxon>Amphibia</taxon>
        <taxon>Batrachia</taxon>
        <taxon>Anura</taxon>
        <taxon>Neobatrachia</taxon>
        <taxon>Hyloidea</taxon>
        <taxon>Hylidae</taxon>
        <taxon>Phyllomedusinae</taxon>
        <taxon>Cruziohyla</taxon>
    </lineage>
</organism>
<name>CZS4_CRUCA</name>
<evidence type="ECO:0000250" key="1">
    <source>
        <dbReference type="UniProtKB" id="A0A193H362"/>
    </source>
</evidence>
<evidence type="ECO:0000269" key="2">
    <source>
    </source>
</evidence>
<evidence type="ECO:0000303" key="3">
    <source>
    </source>
</evidence>
<evidence type="ECO:0000305" key="4"/>
<evidence type="ECO:0000305" key="5">
    <source>
    </source>
</evidence>
<evidence type="ECO:0000312" key="6">
    <source>
        <dbReference type="EMBL" id="ANN87761.1"/>
    </source>
</evidence>
<feature type="peptide" id="PRO_0000439467" description="Cruzioseptin-4" evidence="2">
    <location>
        <begin position="3"/>
        <end position="25"/>
    </location>
</feature>
<feature type="propeptide" id="PRO_0000439468" evidence="5">
    <location>
        <begin position="27"/>
        <end position="28"/>
    </location>
</feature>
<feature type="modified residue" description="Glutamic acid 1-amide" evidence="5">
    <location>
        <position position="25"/>
    </location>
</feature>
<feature type="non-terminal residue" evidence="6">
    <location>
        <position position="1"/>
    </location>
</feature>